<sequence length="926" mass="105361">MSTNPNPGIHQYAPSTLPREREREGATNSPQRNLLEFLCICVACIVCYYNSTQCGLVFDDISAIRDNKDLRPHTPLINVFLNDFWGTPMRKEQSHKSYRPLTVLTFRFNYLLHALEPFGYHLVNLLLHLSVCLLWRRVCRLLLRQCAASGSNAISAPSSSSVSQLNTCAFVASLLFAVHPVHTEAVTGVVGRAELLSSICFLAAFLSYAKSVGDSGCPRRTNWLTLFGCFGSCLLASMLCKEQGITIAGICVVYELFVVHQLRPLHLCHFVLRLFDERTEQQSPKLANPSGIRRWSSSTLWKRLSFLVGITLTLLVGRVYVMGSQLPIFTRFDNPASAADTPERQLTYGYLIYLNCWLLLCPSLLCCDWTMGTVPLLQGFTDSRNITTLLTFLALGAMVAKTCFTRNLALSRTLIMCLGWMVLPFLPASNLFFPVGFVVAERILYMPSMGYCLLVAYGFEQLQRRGSLSWQRFSQAALAILLLTHALKTHQRNLDWRTEYSLFMSGVHVNQRNAKLYNNVGHALENEGKFEEALLYFQQAVRIQTDDIGAHINVGRTFNNLKRYAEAEQAYVQAKALFPQAKPGVSYHARIAPNHLNVFINLANLIAKNQTRLEEADHLYRQAISMRSDYVQAYINRGDILMKLNRTAQAQEVYEQALLYDNENADIYYNLGVVFLEQGKSQQAQVYFNKAIELYPEHEQALLNSAILLQELGGEEARRVSRSRLYKVLENDDQNEKVYFNLGMLAMDESSFDEAEQFFKRAIHLKADFRSALFNLALLLADTKRPLDAVPFLNQLIRHHPSHVKGLILLGDIYINHMKDLDEAEKCYRSILHYDPHNTQGLHNLCVVFVERKRLAKAAACLQYAQRLAPAEDYIGRHLQIVLARLQKINKLPESAPERKLAYEDYDPLEFKLPQDRPTHKSRKRS</sequence>
<keyword id="KW-0256">Endoplasmic reticulum</keyword>
<keyword id="KW-0325">Glycoprotein</keyword>
<keyword id="KW-0472">Membrane</keyword>
<keyword id="KW-1185">Reference proteome</keyword>
<keyword id="KW-0677">Repeat</keyword>
<keyword id="KW-0802">TPR repeat</keyword>
<keyword id="KW-0808">Transferase</keyword>
<keyword id="KW-0812">Transmembrane</keyword>
<keyword id="KW-1133">Transmembrane helix</keyword>
<gene>
    <name evidence="7" type="primary">Tmtc3</name>
    <name evidence="7" type="ORF">CG4050</name>
</gene>
<reference key="1">
    <citation type="journal article" date="2000" name="Science">
        <title>The genome sequence of Drosophila melanogaster.</title>
        <authorList>
            <person name="Adams M.D."/>
            <person name="Celniker S.E."/>
            <person name="Holt R.A."/>
            <person name="Evans C.A."/>
            <person name="Gocayne J.D."/>
            <person name="Amanatides P.G."/>
            <person name="Scherer S.E."/>
            <person name="Li P.W."/>
            <person name="Hoskins R.A."/>
            <person name="Galle R.F."/>
            <person name="George R.A."/>
            <person name="Lewis S.E."/>
            <person name="Richards S."/>
            <person name="Ashburner M."/>
            <person name="Henderson S.N."/>
            <person name="Sutton G.G."/>
            <person name="Wortman J.R."/>
            <person name="Yandell M.D."/>
            <person name="Zhang Q."/>
            <person name="Chen L.X."/>
            <person name="Brandon R.C."/>
            <person name="Rogers Y.-H.C."/>
            <person name="Blazej R.G."/>
            <person name="Champe M."/>
            <person name="Pfeiffer B.D."/>
            <person name="Wan K.H."/>
            <person name="Doyle C."/>
            <person name="Baxter E.G."/>
            <person name="Helt G."/>
            <person name="Nelson C.R."/>
            <person name="Miklos G.L.G."/>
            <person name="Abril J.F."/>
            <person name="Agbayani A."/>
            <person name="An H.-J."/>
            <person name="Andrews-Pfannkoch C."/>
            <person name="Baldwin D."/>
            <person name="Ballew R.M."/>
            <person name="Basu A."/>
            <person name="Baxendale J."/>
            <person name="Bayraktaroglu L."/>
            <person name="Beasley E.M."/>
            <person name="Beeson K.Y."/>
            <person name="Benos P.V."/>
            <person name="Berman B.P."/>
            <person name="Bhandari D."/>
            <person name="Bolshakov S."/>
            <person name="Borkova D."/>
            <person name="Botchan M.R."/>
            <person name="Bouck J."/>
            <person name="Brokstein P."/>
            <person name="Brottier P."/>
            <person name="Burtis K.C."/>
            <person name="Busam D.A."/>
            <person name="Butler H."/>
            <person name="Cadieu E."/>
            <person name="Center A."/>
            <person name="Chandra I."/>
            <person name="Cherry J.M."/>
            <person name="Cawley S."/>
            <person name="Dahlke C."/>
            <person name="Davenport L.B."/>
            <person name="Davies P."/>
            <person name="de Pablos B."/>
            <person name="Delcher A."/>
            <person name="Deng Z."/>
            <person name="Mays A.D."/>
            <person name="Dew I."/>
            <person name="Dietz S.M."/>
            <person name="Dodson K."/>
            <person name="Doup L.E."/>
            <person name="Downes M."/>
            <person name="Dugan-Rocha S."/>
            <person name="Dunkov B.C."/>
            <person name="Dunn P."/>
            <person name="Durbin K.J."/>
            <person name="Evangelista C.C."/>
            <person name="Ferraz C."/>
            <person name="Ferriera S."/>
            <person name="Fleischmann W."/>
            <person name="Fosler C."/>
            <person name="Gabrielian A.E."/>
            <person name="Garg N.S."/>
            <person name="Gelbart W.M."/>
            <person name="Glasser K."/>
            <person name="Glodek A."/>
            <person name="Gong F."/>
            <person name="Gorrell J.H."/>
            <person name="Gu Z."/>
            <person name="Guan P."/>
            <person name="Harris M."/>
            <person name="Harris N.L."/>
            <person name="Harvey D.A."/>
            <person name="Heiman T.J."/>
            <person name="Hernandez J.R."/>
            <person name="Houck J."/>
            <person name="Hostin D."/>
            <person name="Houston K.A."/>
            <person name="Howland T.J."/>
            <person name="Wei M.-H."/>
            <person name="Ibegwam C."/>
            <person name="Jalali M."/>
            <person name="Kalush F."/>
            <person name="Karpen G.H."/>
            <person name="Ke Z."/>
            <person name="Kennison J.A."/>
            <person name="Ketchum K.A."/>
            <person name="Kimmel B.E."/>
            <person name="Kodira C.D."/>
            <person name="Kraft C.L."/>
            <person name="Kravitz S."/>
            <person name="Kulp D."/>
            <person name="Lai Z."/>
            <person name="Lasko P."/>
            <person name="Lei Y."/>
            <person name="Levitsky A.A."/>
            <person name="Li J.H."/>
            <person name="Li Z."/>
            <person name="Liang Y."/>
            <person name="Lin X."/>
            <person name="Liu X."/>
            <person name="Mattei B."/>
            <person name="McIntosh T.C."/>
            <person name="McLeod M.P."/>
            <person name="McPherson D."/>
            <person name="Merkulov G."/>
            <person name="Milshina N.V."/>
            <person name="Mobarry C."/>
            <person name="Morris J."/>
            <person name="Moshrefi A."/>
            <person name="Mount S.M."/>
            <person name="Moy M."/>
            <person name="Murphy B."/>
            <person name="Murphy L."/>
            <person name="Muzny D.M."/>
            <person name="Nelson D.L."/>
            <person name="Nelson D.R."/>
            <person name="Nelson K.A."/>
            <person name="Nixon K."/>
            <person name="Nusskern D.R."/>
            <person name="Pacleb J.M."/>
            <person name="Palazzolo M."/>
            <person name="Pittman G.S."/>
            <person name="Pan S."/>
            <person name="Pollard J."/>
            <person name="Puri V."/>
            <person name="Reese M.G."/>
            <person name="Reinert K."/>
            <person name="Remington K."/>
            <person name="Saunders R.D.C."/>
            <person name="Scheeler F."/>
            <person name="Shen H."/>
            <person name="Shue B.C."/>
            <person name="Siden-Kiamos I."/>
            <person name="Simpson M."/>
            <person name="Skupski M.P."/>
            <person name="Smith T.J."/>
            <person name="Spier E."/>
            <person name="Spradling A.C."/>
            <person name="Stapleton M."/>
            <person name="Strong R."/>
            <person name="Sun E."/>
            <person name="Svirskas R."/>
            <person name="Tector C."/>
            <person name="Turner R."/>
            <person name="Venter E."/>
            <person name="Wang A.H."/>
            <person name="Wang X."/>
            <person name="Wang Z.-Y."/>
            <person name="Wassarman D.A."/>
            <person name="Weinstock G.M."/>
            <person name="Weissenbach J."/>
            <person name="Williams S.M."/>
            <person name="Woodage T."/>
            <person name="Worley K.C."/>
            <person name="Wu D."/>
            <person name="Yang S."/>
            <person name="Yao Q.A."/>
            <person name="Ye J."/>
            <person name="Yeh R.-F."/>
            <person name="Zaveri J.S."/>
            <person name="Zhan M."/>
            <person name="Zhang G."/>
            <person name="Zhao Q."/>
            <person name="Zheng L."/>
            <person name="Zheng X.H."/>
            <person name="Zhong F.N."/>
            <person name="Zhong W."/>
            <person name="Zhou X."/>
            <person name="Zhu S.C."/>
            <person name="Zhu X."/>
            <person name="Smith H.O."/>
            <person name="Gibbs R.A."/>
            <person name="Myers E.W."/>
            <person name="Rubin G.M."/>
            <person name="Venter J.C."/>
        </authorList>
    </citation>
    <scope>NUCLEOTIDE SEQUENCE [LARGE SCALE GENOMIC DNA]</scope>
    <source>
        <strain>Berkeley</strain>
    </source>
</reference>
<reference key="2">
    <citation type="journal article" date="2002" name="Genome Biol.">
        <title>Annotation of the Drosophila melanogaster euchromatic genome: a systematic review.</title>
        <authorList>
            <person name="Misra S."/>
            <person name="Crosby M.A."/>
            <person name="Mungall C.J."/>
            <person name="Matthews B.B."/>
            <person name="Campbell K.S."/>
            <person name="Hradecky P."/>
            <person name="Huang Y."/>
            <person name="Kaminker J.S."/>
            <person name="Millburn G.H."/>
            <person name="Prochnik S.E."/>
            <person name="Smith C.D."/>
            <person name="Tupy J.L."/>
            <person name="Whitfield E.J."/>
            <person name="Bayraktaroglu L."/>
            <person name="Berman B.P."/>
            <person name="Bettencourt B.R."/>
            <person name="Celniker S.E."/>
            <person name="de Grey A.D.N.J."/>
            <person name="Drysdale R.A."/>
            <person name="Harris N.L."/>
            <person name="Richter J."/>
            <person name="Russo S."/>
            <person name="Schroeder A.J."/>
            <person name="Shu S.Q."/>
            <person name="Stapleton M."/>
            <person name="Yamada C."/>
            <person name="Ashburner M."/>
            <person name="Gelbart W.M."/>
            <person name="Rubin G.M."/>
            <person name="Lewis S.E."/>
        </authorList>
    </citation>
    <scope>GENOME REANNOTATION</scope>
    <source>
        <strain>Berkeley</strain>
    </source>
</reference>
<reference key="3">
    <citation type="journal article" date="2002" name="Genome Biol.">
        <title>A Drosophila full-length cDNA resource.</title>
        <authorList>
            <person name="Stapleton M."/>
            <person name="Carlson J.W."/>
            <person name="Brokstein P."/>
            <person name="Yu C."/>
            <person name="Champe M."/>
            <person name="George R.A."/>
            <person name="Guarin H."/>
            <person name="Kronmiller B."/>
            <person name="Pacleb J.M."/>
            <person name="Park S."/>
            <person name="Wan K.H."/>
            <person name="Rubin G.M."/>
            <person name="Celniker S.E."/>
        </authorList>
    </citation>
    <scope>NUCLEOTIDE SEQUENCE [LARGE SCALE MRNA]</scope>
    <source>
        <strain>Berkeley</strain>
        <tissue>Embryo</tissue>
    </source>
</reference>
<reference key="4">
    <citation type="submission" date="1997-06" db="EMBL/GenBank/DDBJ databases">
        <authorList>
            <person name="Davis T."/>
        </authorList>
    </citation>
    <scope>NUCLEOTIDE SEQUENCE [MRNA] OF 674-926</scope>
</reference>
<accession>Q7K4B6</accession>
<accession>O02435</accession>
<accession>Q24581</accession>
<evidence type="ECO:0000250" key="1">
    <source>
        <dbReference type="UniProtKB" id="Q6ZXV5"/>
    </source>
</evidence>
<evidence type="ECO:0000255" key="2"/>
<evidence type="ECO:0000255" key="3">
    <source>
        <dbReference type="PROSITE-ProRule" id="PRU00339"/>
    </source>
</evidence>
<evidence type="ECO:0000255" key="4">
    <source>
        <dbReference type="PROSITE-ProRule" id="PRU00498"/>
    </source>
</evidence>
<evidence type="ECO:0000256" key="5">
    <source>
        <dbReference type="SAM" id="MobiDB-lite"/>
    </source>
</evidence>
<evidence type="ECO:0000305" key="6"/>
<evidence type="ECO:0000312" key="7">
    <source>
        <dbReference type="FlyBase" id="FBgn0020312"/>
    </source>
</evidence>
<evidence type="ECO:0000312" key="8">
    <source>
        <dbReference type="Proteomes" id="UP000000803"/>
    </source>
</evidence>
<dbReference type="EC" id="2.4.1.109" evidence="1"/>
<dbReference type="EMBL" id="AE013599">
    <property type="protein sequence ID" value="AAF46676.2"/>
    <property type="molecule type" value="Genomic_DNA"/>
</dbReference>
<dbReference type="EMBL" id="AY052013">
    <property type="protein sequence ID" value="AAK93437.1"/>
    <property type="molecule type" value="mRNA"/>
</dbReference>
<dbReference type="EMBL" id="X92653">
    <property type="protein sequence ID" value="CAA63344.1"/>
    <property type="status" value="ALT_FRAME"/>
    <property type="molecule type" value="mRNA"/>
</dbReference>
<dbReference type="RefSeq" id="NP_477246.2">
    <property type="nucleotide sequence ID" value="NM_057898.4"/>
</dbReference>
<dbReference type="RefSeq" id="NP_726030.1">
    <property type="nucleotide sequence ID" value="NM_166426.2"/>
</dbReference>
<dbReference type="SMR" id="Q7K4B6"/>
<dbReference type="BioGRID" id="63038">
    <property type="interactions" value="1"/>
</dbReference>
<dbReference type="FunCoup" id="Q7K4B6">
    <property type="interactions" value="1089"/>
</dbReference>
<dbReference type="STRING" id="7227.FBpp0071561"/>
<dbReference type="GlyCosmos" id="Q7K4B6">
    <property type="glycosylation" value="2 sites, No reported glycans"/>
</dbReference>
<dbReference type="GlyGen" id="Q7K4B6">
    <property type="glycosylation" value="2 sites"/>
</dbReference>
<dbReference type="PaxDb" id="7227-FBpp0071560"/>
<dbReference type="DNASU" id="37401"/>
<dbReference type="EnsemblMetazoa" id="FBtr0071637">
    <property type="protein sequence ID" value="FBpp0071560"/>
    <property type="gene ID" value="FBgn0020312"/>
</dbReference>
<dbReference type="EnsemblMetazoa" id="FBtr0071638">
    <property type="protein sequence ID" value="FBpp0071561"/>
    <property type="gene ID" value="FBgn0020312"/>
</dbReference>
<dbReference type="GeneID" id="37401"/>
<dbReference type="KEGG" id="dme:Dmel_CG4050"/>
<dbReference type="UCSC" id="CG4050-RA">
    <property type="organism name" value="d. melanogaster"/>
</dbReference>
<dbReference type="AGR" id="FB:FBgn0020312"/>
<dbReference type="CTD" id="160418"/>
<dbReference type="FlyBase" id="FBgn0020312">
    <property type="gene designation" value="Tmtc3"/>
</dbReference>
<dbReference type="VEuPathDB" id="VectorBase:FBgn0020312"/>
<dbReference type="eggNOG" id="KOG1124">
    <property type="taxonomic scope" value="Eukaryota"/>
</dbReference>
<dbReference type="GeneTree" id="ENSGT00940000157538"/>
<dbReference type="HOGENOM" id="CLU_011615_1_0_1"/>
<dbReference type="InParanoid" id="Q7K4B6"/>
<dbReference type="OMA" id="AKACFTR"/>
<dbReference type="OrthoDB" id="66906at2759"/>
<dbReference type="PhylomeDB" id="Q7K4B6"/>
<dbReference type="UniPathway" id="UPA00378"/>
<dbReference type="BioGRID-ORCS" id="37401">
    <property type="hits" value="0 hits in 1 CRISPR screen"/>
</dbReference>
<dbReference type="GenomeRNAi" id="37401"/>
<dbReference type="PRO" id="PR:Q7K4B6"/>
<dbReference type="Proteomes" id="UP000000803">
    <property type="component" value="Chromosome 2R"/>
</dbReference>
<dbReference type="Bgee" id="FBgn0020312">
    <property type="expression patterns" value="Expressed in T neuron T5d (Drosophila) in embryonic/larval optic lobe (Drosophila) and 81 other cell types or tissues"/>
</dbReference>
<dbReference type="ExpressionAtlas" id="Q7K4B6">
    <property type="expression patterns" value="baseline and differential"/>
</dbReference>
<dbReference type="GO" id="GO:0005783">
    <property type="term" value="C:endoplasmic reticulum"/>
    <property type="evidence" value="ECO:0000318"/>
    <property type="project" value="GO_Central"/>
</dbReference>
<dbReference type="GO" id="GO:0005789">
    <property type="term" value="C:endoplasmic reticulum membrane"/>
    <property type="evidence" value="ECO:0000250"/>
    <property type="project" value="FlyBase"/>
</dbReference>
<dbReference type="GO" id="GO:0004169">
    <property type="term" value="F:dolichyl-phosphate-mannose-protein mannosyltransferase activity"/>
    <property type="evidence" value="ECO:0000250"/>
    <property type="project" value="UniProtKB"/>
</dbReference>
<dbReference type="GO" id="GO:0000030">
    <property type="term" value="F:mannosyltransferase activity"/>
    <property type="evidence" value="ECO:0000318"/>
    <property type="project" value="GO_Central"/>
</dbReference>
<dbReference type="GO" id="GO:0035269">
    <property type="term" value="P:protein O-linked mannosylation"/>
    <property type="evidence" value="ECO:0000250"/>
    <property type="project" value="UniProtKB"/>
</dbReference>
<dbReference type="FunFam" id="1.25.40.10:FF:000239">
    <property type="entry name" value="Transmembrane and TPR repeat-containing protein 3"/>
    <property type="match status" value="1"/>
</dbReference>
<dbReference type="FunFam" id="1.25.40.10:FF:000528">
    <property type="entry name" value="Transmembrane and TPR repeat-containing protein 3"/>
    <property type="match status" value="1"/>
</dbReference>
<dbReference type="FunFam" id="1.25.40.10:FF:000175">
    <property type="entry name" value="transmembrane and TPR repeat-containing protein 3"/>
    <property type="match status" value="1"/>
</dbReference>
<dbReference type="Gene3D" id="1.25.40.10">
    <property type="entry name" value="Tetratricopeptide repeat domain"/>
    <property type="match status" value="3"/>
</dbReference>
<dbReference type="InterPro" id="IPR013618">
    <property type="entry name" value="TMTC_DUF1736"/>
</dbReference>
<dbReference type="InterPro" id="IPR011990">
    <property type="entry name" value="TPR-like_helical_dom_sf"/>
</dbReference>
<dbReference type="InterPro" id="IPR013105">
    <property type="entry name" value="TPR_2"/>
</dbReference>
<dbReference type="InterPro" id="IPR019734">
    <property type="entry name" value="TPR_rpt"/>
</dbReference>
<dbReference type="PANTHER" id="PTHR44395">
    <property type="match status" value="1"/>
</dbReference>
<dbReference type="PANTHER" id="PTHR44395:SF1">
    <property type="entry name" value="PROTEIN O-MANNOSYL-TRANSFERASE TMTC3"/>
    <property type="match status" value="1"/>
</dbReference>
<dbReference type="Pfam" id="PF08409">
    <property type="entry name" value="TMTC_DUF1736"/>
    <property type="match status" value="1"/>
</dbReference>
<dbReference type="Pfam" id="PF13414">
    <property type="entry name" value="TPR_11"/>
    <property type="match status" value="1"/>
</dbReference>
<dbReference type="Pfam" id="PF13432">
    <property type="entry name" value="TPR_16"/>
    <property type="match status" value="1"/>
</dbReference>
<dbReference type="Pfam" id="PF07719">
    <property type="entry name" value="TPR_2"/>
    <property type="match status" value="1"/>
</dbReference>
<dbReference type="Pfam" id="PF13181">
    <property type="entry name" value="TPR_8"/>
    <property type="match status" value="1"/>
</dbReference>
<dbReference type="SMART" id="SM00028">
    <property type="entry name" value="TPR"/>
    <property type="match status" value="8"/>
</dbReference>
<dbReference type="SUPFAM" id="SSF48452">
    <property type="entry name" value="TPR-like"/>
    <property type="match status" value="2"/>
</dbReference>
<dbReference type="PROSITE" id="PS50005">
    <property type="entry name" value="TPR"/>
    <property type="match status" value="8"/>
</dbReference>
<dbReference type="PROSITE" id="PS50293">
    <property type="entry name" value="TPR_REGION"/>
    <property type="match status" value="4"/>
</dbReference>
<organism evidence="8">
    <name type="scientific">Drosophila melanogaster</name>
    <name type="common">Fruit fly</name>
    <dbReference type="NCBI Taxonomy" id="7227"/>
    <lineage>
        <taxon>Eukaryota</taxon>
        <taxon>Metazoa</taxon>
        <taxon>Ecdysozoa</taxon>
        <taxon>Arthropoda</taxon>
        <taxon>Hexapoda</taxon>
        <taxon>Insecta</taxon>
        <taxon>Pterygota</taxon>
        <taxon>Neoptera</taxon>
        <taxon>Endopterygota</taxon>
        <taxon>Diptera</taxon>
        <taxon>Brachycera</taxon>
        <taxon>Muscomorpha</taxon>
        <taxon>Ephydroidea</taxon>
        <taxon>Drosophilidae</taxon>
        <taxon>Drosophila</taxon>
        <taxon>Sophophora</taxon>
    </lineage>
</organism>
<proteinExistence type="evidence at transcript level"/>
<feature type="chain" id="PRO_0000280300" description="Protein O-mannosyl-transferase Tmtc3">
    <location>
        <begin position="1"/>
        <end position="926"/>
    </location>
</feature>
<feature type="topological domain" description="Cytoplasmic" evidence="6">
    <location>
        <begin position="1"/>
        <end position="36"/>
    </location>
</feature>
<feature type="transmembrane region" description="Helical" evidence="2">
    <location>
        <begin position="37"/>
        <end position="57"/>
    </location>
</feature>
<feature type="topological domain" description="Extracellular" evidence="6">
    <location>
        <begin position="58"/>
        <end position="114"/>
    </location>
</feature>
<feature type="transmembrane region" description="Helical" evidence="2">
    <location>
        <begin position="115"/>
        <end position="135"/>
    </location>
</feature>
<feature type="topological domain" description="Cytoplasmic" evidence="6">
    <location>
        <begin position="136"/>
        <end position="169"/>
    </location>
</feature>
<feature type="transmembrane region" description="Helical" evidence="2">
    <location>
        <begin position="170"/>
        <end position="190"/>
    </location>
</feature>
<feature type="topological domain" description="Extracellular" evidence="6">
    <location>
        <begin position="191"/>
        <end position="192"/>
    </location>
</feature>
<feature type="transmembrane region" description="Helical" evidence="2">
    <location>
        <begin position="193"/>
        <end position="213"/>
    </location>
</feature>
<feature type="topological domain" description="Cytoplasmic" evidence="6">
    <location>
        <begin position="214"/>
        <end position="222"/>
    </location>
</feature>
<feature type="transmembrane region" description="Helical" evidence="2">
    <location>
        <begin position="223"/>
        <end position="239"/>
    </location>
</feature>
<feature type="transmembrane region" description="Helical" evidence="2">
    <location>
        <begin position="240"/>
        <end position="259"/>
    </location>
</feature>
<feature type="topological domain" description="Cytoplasmic" evidence="6">
    <location>
        <begin position="260"/>
        <end position="303"/>
    </location>
</feature>
<feature type="transmembrane region" description="Helical" evidence="2">
    <location>
        <begin position="304"/>
        <end position="324"/>
    </location>
</feature>
<feature type="topological domain" description="Extracellular" evidence="6">
    <location>
        <begin position="325"/>
        <end position="345"/>
    </location>
</feature>
<feature type="transmembrane region" description="Helical" evidence="2">
    <location>
        <begin position="346"/>
        <end position="366"/>
    </location>
</feature>
<feature type="topological domain" description="Cytoplasmic" evidence="6">
    <location>
        <begin position="367"/>
        <end position="384"/>
    </location>
</feature>
<feature type="transmembrane region" description="Helical" evidence="2">
    <location>
        <begin position="385"/>
        <end position="405"/>
    </location>
</feature>
<feature type="topological domain" description="Extracellular" evidence="6">
    <location>
        <begin position="406"/>
        <end position="419"/>
    </location>
</feature>
<feature type="transmembrane region" description="Helical" evidence="2">
    <location>
        <begin position="420"/>
        <end position="440"/>
    </location>
</feature>
<feature type="topological domain" description="Cytoplasmic" evidence="6">
    <location>
        <begin position="441"/>
        <end position="442"/>
    </location>
</feature>
<feature type="transmembrane region" description="Helical" evidence="2">
    <location>
        <begin position="443"/>
        <end position="463"/>
    </location>
</feature>
<feature type="topological domain" description="Extracellular" evidence="6">
    <location>
        <begin position="464"/>
        <end position="926"/>
    </location>
</feature>
<feature type="repeat" description="TPR 1" evidence="3">
    <location>
        <begin position="514"/>
        <end position="547"/>
    </location>
</feature>
<feature type="repeat" description="TPR 2" evidence="3">
    <location>
        <begin position="548"/>
        <end position="581"/>
    </location>
</feature>
<feature type="repeat" description="TPR 3" evidence="2">
    <location>
        <begin position="596"/>
        <end position="630"/>
    </location>
</feature>
<feature type="repeat" description="TPR 4" evidence="3">
    <location>
        <begin position="631"/>
        <end position="664"/>
    </location>
</feature>
<feature type="repeat" description="TPR 5" evidence="3">
    <location>
        <begin position="665"/>
        <end position="698"/>
    </location>
</feature>
<feature type="repeat" description="TPR 6" evidence="3">
    <location>
        <begin position="736"/>
        <end position="769"/>
    </location>
</feature>
<feature type="repeat" description="TPR 7" evidence="3">
    <location>
        <begin position="770"/>
        <end position="803"/>
    </location>
</feature>
<feature type="repeat" description="TPR 8" evidence="3">
    <location>
        <begin position="805"/>
        <end position="838"/>
    </location>
</feature>
<feature type="repeat" description="TPR 9" evidence="3">
    <location>
        <begin position="839"/>
        <end position="872"/>
    </location>
</feature>
<feature type="region of interest" description="Disordered" evidence="5">
    <location>
        <begin position="1"/>
        <end position="26"/>
    </location>
</feature>
<feature type="glycosylation site" description="N-linked (GlcNAc...) asparagine" evidence="4">
    <location>
        <position position="609"/>
    </location>
</feature>
<feature type="glycosylation site" description="N-linked (GlcNAc...) asparagine" evidence="4">
    <location>
        <position position="645"/>
    </location>
</feature>
<feature type="sequence conflict" description="In Ref. 4; CAA63344." evidence="6" ref="4">
    <original>D</original>
    <variation>H</variation>
    <location>
        <position position="732"/>
    </location>
</feature>
<feature type="sequence conflict" description="In Ref. 4; CAA63344." evidence="6" ref="4">
    <original>D</original>
    <variation>V</variation>
    <location>
        <position position="916"/>
    </location>
</feature>
<name>TMTC3_DROME</name>
<protein>
    <recommendedName>
        <fullName evidence="6">Protein O-mannosyl-transferase Tmtc3</fullName>
        <ecNumber evidence="1">2.4.1.109</ecNumber>
    </recommendedName>
    <alternativeName>
        <fullName evidence="7">Transmembrane O-mannosyltransferase targeting cadherins 3</fullName>
    </alternativeName>
    <alternativeName>
        <fullName evidence="1">Transmembrane and tetratricopeptide repeat-containing 3</fullName>
    </alternativeName>
</protein>
<comment type="function">
    <text evidence="1">Transfers mannosyl residues to the hydroxyl group of serine or threonine residues.</text>
</comment>
<comment type="catalytic activity">
    <reaction evidence="1">
        <text>a di-trans,poly-cis-dolichyl beta-D-mannosyl phosphate + L-seryl-[protein] = 3-O-(alpha-D-mannosyl)-L-seryl-[protein] + a di-trans,poly-cis-dolichyl phosphate + H(+)</text>
        <dbReference type="Rhea" id="RHEA:17377"/>
        <dbReference type="Rhea" id="RHEA-COMP:9863"/>
        <dbReference type="Rhea" id="RHEA-COMP:13546"/>
        <dbReference type="Rhea" id="RHEA-COMP:19498"/>
        <dbReference type="Rhea" id="RHEA-COMP:19501"/>
        <dbReference type="ChEBI" id="CHEBI:15378"/>
        <dbReference type="ChEBI" id="CHEBI:29999"/>
        <dbReference type="ChEBI" id="CHEBI:57683"/>
        <dbReference type="ChEBI" id="CHEBI:58211"/>
        <dbReference type="ChEBI" id="CHEBI:137321"/>
        <dbReference type="EC" id="2.4.1.109"/>
    </reaction>
</comment>
<comment type="catalytic activity">
    <reaction evidence="1">
        <text>a di-trans,poly-cis-dolichyl beta-D-mannosyl phosphate + L-threonyl-[protein] = 3-O-(alpha-D-mannosyl)-L-threonyl-[protein] + a di-trans,poly-cis-dolichyl phosphate + H(+)</text>
        <dbReference type="Rhea" id="RHEA:53396"/>
        <dbReference type="Rhea" id="RHEA-COMP:11060"/>
        <dbReference type="Rhea" id="RHEA-COMP:13547"/>
        <dbReference type="Rhea" id="RHEA-COMP:19498"/>
        <dbReference type="Rhea" id="RHEA-COMP:19501"/>
        <dbReference type="ChEBI" id="CHEBI:15378"/>
        <dbReference type="ChEBI" id="CHEBI:30013"/>
        <dbReference type="ChEBI" id="CHEBI:57683"/>
        <dbReference type="ChEBI" id="CHEBI:58211"/>
        <dbReference type="ChEBI" id="CHEBI:137323"/>
        <dbReference type="EC" id="2.4.1.109"/>
    </reaction>
</comment>
<comment type="pathway">
    <text evidence="1">Protein modification; protein glycosylation.</text>
</comment>
<comment type="subcellular location">
    <subcellularLocation>
        <location evidence="2">Membrane</location>
        <topology evidence="2">Multi-pass membrane protein</topology>
    </subcellularLocation>
    <subcellularLocation>
        <location evidence="1">Endoplasmic reticulum</location>
    </subcellularLocation>
</comment>
<comment type="similarity">
    <text evidence="6">Belongs to the TMTC family.</text>
</comment>
<comment type="sequence caution" evidence="6">
    <conflict type="frameshift">
        <sequence resource="EMBL-CDS" id="CAA63344"/>
    </conflict>
</comment>